<comment type="function">
    <text evidence="6">Component of the mitochondrial ribosome (mitoribosome), a dedicated translation machinery responsible for the synthesis of mitochondrial genome-encoded proteins, including at least some of the essential transmembrane subunits of the mitochondrial respiratory chain. The mitoribosomes are attached to the mitochondrial inner membrane and translation products are cotranslationally integrated into the membrane.</text>
</comment>
<comment type="subunit">
    <text evidence="3">Component of the mitochondrial small ribosomal subunit (mt-SSU). Mature N.crassa 74S mitochondrial ribosomes consist of a small (37S) and a large (54S) subunit. The 37S small subunit contains a 16S ribosomal RNA (16S mt-rRNA) and 32 different proteins. The 54S large subunit contains a 23S rRNA (23S mt-rRNA) and 42 different proteins.</text>
</comment>
<comment type="subcellular location">
    <subcellularLocation>
        <location evidence="3">Mitochondrion</location>
    </subcellularLocation>
</comment>
<comment type="similarity">
    <text evidence="5">Belongs to the universal ribosomal protein uS9 family.</text>
</comment>
<comment type="sequence caution" evidence="5">
    <conflict type="erroneous initiation">
        <sequence resource="EMBL-CDS" id="CAE76105"/>
    </conflict>
    <text>Truncated N-terminus.</text>
</comment>
<name>RT09_NEUCR</name>
<reference key="1">
    <citation type="journal article" date="2003" name="Nucleic Acids Res.">
        <title>What's in the genome of a filamentous fungus? Analysis of the Neurospora genome sequence.</title>
        <authorList>
            <person name="Mannhaupt G."/>
            <person name="Montrone C."/>
            <person name="Haase D."/>
            <person name="Mewes H.-W."/>
            <person name="Aign V."/>
            <person name="Hoheisel J.D."/>
            <person name="Fartmann B."/>
            <person name="Nyakatura G."/>
            <person name="Kempken F."/>
            <person name="Maier J."/>
            <person name="Schulte U."/>
        </authorList>
    </citation>
    <scope>NUCLEOTIDE SEQUENCE [LARGE SCALE GENOMIC DNA]</scope>
    <source>
        <strain>ATCC 24698 / 74-OR23-1A / CBS 708.71 / DSM 1257 / FGSC 987</strain>
    </source>
</reference>
<reference key="2">
    <citation type="journal article" date="2003" name="Nature">
        <title>The genome sequence of the filamentous fungus Neurospora crassa.</title>
        <authorList>
            <person name="Galagan J.E."/>
            <person name="Calvo S.E."/>
            <person name="Borkovich K.A."/>
            <person name="Selker E.U."/>
            <person name="Read N.D."/>
            <person name="Jaffe D.B."/>
            <person name="FitzHugh W."/>
            <person name="Ma L.-J."/>
            <person name="Smirnov S."/>
            <person name="Purcell S."/>
            <person name="Rehman B."/>
            <person name="Elkins T."/>
            <person name="Engels R."/>
            <person name="Wang S."/>
            <person name="Nielsen C.B."/>
            <person name="Butler J."/>
            <person name="Endrizzi M."/>
            <person name="Qui D."/>
            <person name="Ianakiev P."/>
            <person name="Bell-Pedersen D."/>
            <person name="Nelson M.A."/>
            <person name="Werner-Washburne M."/>
            <person name="Selitrennikoff C.P."/>
            <person name="Kinsey J.A."/>
            <person name="Braun E.L."/>
            <person name="Zelter A."/>
            <person name="Schulte U."/>
            <person name="Kothe G.O."/>
            <person name="Jedd G."/>
            <person name="Mewes H.-W."/>
            <person name="Staben C."/>
            <person name="Marcotte E."/>
            <person name="Greenberg D."/>
            <person name="Roy A."/>
            <person name="Foley K."/>
            <person name="Naylor J."/>
            <person name="Stange-Thomann N."/>
            <person name="Barrett R."/>
            <person name="Gnerre S."/>
            <person name="Kamal M."/>
            <person name="Kamvysselis M."/>
            <person name="Mauceli E.W."/>
            <person name="Bielke C."/>
            <person name="Rudd S."/>
            <person name="Frishman D."/>
            <person name="Krystofova S."/>
            <person name="Rasmussen C."/>
            <person name="Metzenberg R.L."/>
            <person name="Perkins D.D."/>
            <person name="Kroken S."/>
            <person name="Cogoni C."/>
            <person name="Macino G."/>
            <person name="Catcheside D.E.A."/>
            <person name="Li W."/>
            <person name="Pratt R.J."/>
            <person name="Osmani S.A."/>
            <person name="DeSouza C.P.C."/>
            <person name="Glass N.L."/>
            <person name="Orbach M.J."/>
            <person name="Berglund J.A."/>
            <person name="Voelker R."/>
            <person name="Yarden O."/>
            <person name="Plamann M."/>
            <person name="Seiler S."/>
            <person name="Dunlap J.C."/>
            <person name="Radford A."/>
            <person name="Aramayo R."/>
            <person name="Natvig D.O."/>
            <person name="Alex L.A."/>
            <person name="Mannhaupt G."/>
            <person name="Ebbole D.J."/>
            <person name="Freitag M."/>
            <person name="Paulsen I."/>
            <person name="Sachs M.S."/>
            <person name="Lander E.S."/>
            <person name="Nusbaum C."/>
            <person name="Birren B.W."/>
        </authorList>
    </citation>
    <scope>NUCLEOTIDE SEQUENCE [LARGE SCALE GENOMIC DNA]</scope>
    <source>
        <strain>ATCC 24698 / 74-OR23-1A / CBS 708.71 / DSM 1257 / FGSC 987</strain>
    </source>
</reference>
<reference evidence="7 8" key="3">
    <citation type="journal article" date="2020" name="Nat. Commun.">
        <title>Analysis of translating mitoribosome reveals functional characteristics of translation in mitochondria of fungi.</title>
        <authorList>
            <person name="Itoh Y."/>
            <person name="Naschberger A."/>
            <person name="Mortezaei N."/>
            <person name="Herrmann J.M."/>
            <person name="Amunts A."/>
        </authorList>
    </citation>
    <scope>STRUCTURE BY ELECTRON MICROSCOPY (2.85 ANGSTROMS)</scope>
</reference>
<organism>
    <name type="scientific">Neurospora crassa (strain ATCC 24698 / 74-OR23-1A / CBS 708.71 / DSM 1257 / FGSC 987)</name>
    <dbReference type="NCBI Taxonomy" id="367110"/>
    <lineage>
        <taxon>Eukaryota</taxon>
        <taxon>Fungi</taxon>
        <taxon>Dikarya</taxon>
        <taxon>Ascomycota</taxon>
        <taxon>Pezizomycotina</taxon>
        <taxon>Sordariomycetes</taxon>
        <taxon>Sordariomycetidae</taxon>
        <taxon>Sordariales</taxon>
        <taxon>Sordariaceae</taxon>
        <taxon>Neurospora</taxon>
    </lineage>
</organism>
<dbReference type="EMBL" id="BX842617">
    <property type="protein sequence ID" value="CAE76105.1"/>
    <property type="status" value="ALT_INIT"/>
    <property type="molecule type" value="Genomic_DNA"/>
</dbReference>
<dbReference type="EMBL" id="CM002240">
    <property type="protein sequence ID" value="EAA31980.2"/>
    <property type="molecule type" value="Genomic_DNA"/>
</dbReference>
<dbReference type="RefSeq" id="XP_961216.2">
    <property type="nucleotide sequence ID" value="XM_956123.2"/>
</dbReference>
<dbReference type="PDB" id="6YW5">
    <property type="method" value="EM"/>
    <property type="resolution" value="2.85 A"/>
    <property type="chains" value="II=1-315"/>
</dbReference>
<dbReference type="PDB" id="6YWX">
    <property type="method" value="EM"/>
    <property type="resolution" value="3.10 A"/>
    <property type="chains" value="II=1-315"/>
</dbReference>
<dbReference type="PDBsum" id="6YW5"/>
<dbReference type="PDBsum" id="6YWX"/>
<dbReference type="EMDB" id="EMD-10958"/>
<dbReference type="EMDB" id="EMD-10978"/>
<dbReference type="SMR" id="Q7S7R6"/>
<dbReference type="FunCoup" id="Q7S7R6">
    <property type="interactions" value="161"/>
</dbReference>
<dbReference type="STRING" id="367110.Q7S7R6"/>
<dbReference type="PaxDb" id="5141-EFNCRP00000003300"/>
<dbReference type="EnsemblFungi" id="EAA31980">
    <property type="protein sequence ID" value="EAA31980"/>
    <property type="gene ID" value="NCU03827"/>
</dbReference>
<dbReference type="GeneID" id="3877344"/>
<dbReference type="KEGG" id="ncr:NCU03827"/>
<dbReference type="VEuPathDB" id="FungiDB:NCU03827"/>
<dbReference type="HOGENOM" id="CLU_036531_2_0_1"/>
<dbReference type="InParanoid" id="Q7S7R6"/>
<dbReference type="OrthoDB" id="10254627at2759"/>
<dbReference type="Proteomes" id="UP000001805">
    <property type="component" value="Chromosome 2, Linkage Group V"/>
</dbReference>
<dbReference type="GO" id="GO:0005763">
    <property type="term" value="C:mitochondrial small ribosomal subunit"/>
    <property type="evidence" value="ECO:0000318"/>
    <property type="project" value="GO_Central"/>
</dbReference>
<dbReference type="GO" id="GO:0003723">
    <property type="term" value="F:RNA binding"/>
    <property type="evidence" value="ECO:0000318"/>
    <property type="project" value="GO_Central"/>
</dbReference>
<dbReference type="GO" id="GO:0003735">
    <property type="term" value="F:structural constituent of ribosome"/>
    <property type="evidence" value="ECO:0000318"/>
    <property type="project" value="GO_Central"/>
</dbReference>
<dbReference type="GO" id="GO:0006412">
    <property type="term" value="P:translation"/>
    <property type="evidence" value="ECO:0007669"/>
    <property type="project" value="InterPro"/>
</dbReference>
<dbReference type="FunFam" id="3.30.230.10:FF:000001">
    <property type="entry name" value="30S ribosomal protein S9"/>
    <property type="match status" value="1"/>
</dbReference>
<dbReference type="Gene3D" id="3.30.230.10">
    <property type="match status" value="1"/>
</dbReference>
<dbReference type="InterPro" id="IPR020568">
    <property type="entry name" value="Ribosomal_Su5_D2-typ_SF"/>
</dbReference>
<dbReference type="InterPro" id="IPR000754">
    <property type="entry name" value="Ribosomal_uS9"/>
</dbReference>
<dbReference type="InterPro" id="IPR023035">
    <property type="entry name" value="Ribosomal_uS9_bac/plastid"/>
</dbReference>
<dbReference type="InterPro" id="IPR020574">
    <property type="entry name" value="Ribosomal_uS9_CS"/>
</dbReference>
<dbReference type="InterPro" id="IPR014721">
    <property type="entry name" value="Ribsml_uS5_D2-typ_fold_subgr"/>
</dbReference>
<dbReference type="NCBIfam" id="NF001099">
    <property type="entry name" value="PRK00132.1"/>
    <property type="match status" value="1"/>
</dbReference>
<dbReference type="PANTHER" id="PTHR21569">
    <property type="entry name" value="RIBOSOMAL PROTEIN S9"/>
    <property type="match status" value="1"/>
</dbReference>
<dbReference type="PANTHER" id="PTHR21569:SF1">
    <property type="entry name" value="SMALL RIBOSOMAL SUBUNIT PROTEIN US9M"/>
    <property type="match status" value="1"/>
</dbReference>
<dbReference type="Pfam" id="PF00380">
    <property type="entry name" value="Ribosomal_S9"/>
    <property type="match status" value="1"/>
</dbReference>
<dbReference type="SUPFAM" id="SSF54211">
    <property type="entry name" value="Ribosomal protein S5 domain 2-like"/>
    <property type="match status" value="1"/>
</dbReference>
<dbReference type="PROSITE" id="PS00360">
    <property type="entry name" value="RIBOSOMAL_S9"/>
    <property type="match status" value="1"/>
</dbReference>
<sequence>MMASLRHSITSALRSSRQGCSKSAQWQSLDQQFGALRISSRSLSTHAHDHNPNVDGQFIAAPALSIDNFKLHPYARAVPVSPSYFTRTPRFYDNYLSLEKLMEEYEDLPVIPATAVERVAWKTLEDIRKELGEQVKASEFARCLALVKRLNSIHPDLKPQEIKDVLDSFRRNVQPFTNVAKPIPIDQFGRACGVGKRKASSARAFVVEGTGEVLVNGKTLAEYFGRVHDRESAVWALRATNRIDKYNVWVKVEGGGTTGQAEAITLAIAKALLAHEPALKPALRRAGCVTRDPRKVERKKHGHVKARKMPTWVKR</sequence>
<keyword id="KW-0002">3D-structure</keyword>
<keyword id="KW-0496">Mitochondrion</keyword>
<keyword id="KW-1185">Reference proteome</keyword>
<keyword id="KW-0687">Ribonucleoprotein</keyword>
<keyword id="KW-0689">Ribosomal protein</keyword>
<keyword id="KW-0809">Transit peptide</keyword>
<feature type="transit peptide" description="Mitochondrion" evidence="1">
    <location>
        <begin position="1"/>
        <end position="42"/>
    </location>
</feature>
<feature type="chain" id="PRO_0000030650" description="Small ribosomal subunit protein uS9m">
    <location>
        <begin position="43"/>
        <end position="315"/>
    </location>
</feature>
<feature type="region of interest" description="Disordered" evidence="2">
    <location>
        <begin position="293"/>
        <end position="315"/>
    </location>
</feature>
<feature type="compositionally biased region" description="Basic residues" evidence="2">
    <location>
        <begin position="296"/>
        <end position="315"/>
    </location>
</feature>
<evidence type="ECO:0000255" key="1"/>
<evidence type="ECO:0000256" key="2">
    <source>
        <dbReference type="SAM" id="MobiDB-lite"/>
    </source>
</evidence>
<evidence type="ECO:0000269" key="3">
    <source>
    </source>
</evidence>
<evidence type="ECO:0000303" key="4">
    <source>
    </source>
</evidence>
<evidence type="ECO:0000305" key="5"/>
<evidence type="ECO:0000305" key="6">
    <source>
    </source>
</evidence>
<evidence type="ECO:0007744" key="7">
    <source>
        <dbReference type="PDB" id="6YW5"/>
    </source>
</evidence>
<evidence type="ECO:0007744" key="8">
    <source>
        <dbReference type="PDB" id="6YWX"/>
    </source>
</evidence>
<protein>
    <recommendedName>
        <fullName evidence="4">Small ribosomal subunit protein uS9m</fullName>
    </recommendedName>
    <alternativeName>
        <fullName>37S ribosomal protein S9, mitochondrial</fullName>
    </alternativeName>
    <alternativeName>
        <fullName>Mitochondrial ribosomal protein 9</fullName>
    </alternativeName>
</protein>
<accession>Q7S7R6</accession>
<proteinExistence type="evidence at protein level"/>
<gene>
    <name type="primary">mrp-9</name>
    <name type="synonym">mrps9</name>
    <name type="ORF">82C3.030</name>
    <name type="ORF">NCU03827</name>
</gene>